<accession>A8ABM5</accession>
<evidence type="ECO:0000250" key="1"/>
<evidence type="ECO:0000255" key="2">
    <source>
        <dbReference type="HAMAP-Rule" id="MF_00118"/>
    </source>
</evidence>
<feature type="chain" id="PRO_0000337603" description="Elongation factor 1-alpha">
    <location>
        <begin position="1"/>
        <end position="442"/>
    </location>
</feature>
<feature type="domain" description="tr-type G">
    <location>
        <begin position="6"/>
        <end position="229"/>
    </location>
</feature>
<feature type="region of interest" description="G1" evidence="1">
    <location>
        <begin position="15"/>
        <end position="22"/>
    </location>
</feature>
<feature type="region of interest" description="G2" evidence="1">
    <location>
        <begin position="71"/>
        <end position="75"/>
    </location>
</feature>
<feature type="region of interest" description="G3" evidence="1">
    <location>
        <begin position="92"/>
        <end position="95"/>
    </location>
</feature>
<feature type="region of interest" description="G4" evidence="1">
    <location>
        <begin position="154"/>
        <end position="157"/>
    </location>
</feature>
<feature type="region of interest" description="G5" evidence="1">
    <location>
        <begin position="195"/>
        <end position="197"/>
    </location>
</feature>
<feature type="binding site" evidence="2">
    <location>
        <begin position="15"/>
        <end position="22"/>
    </location>
    <ligand>
        <name>GTP</name>
        <dbReference type="ChEBI" id="CHEBI:37565"/>
    </ligand>
</feature>
<feature type="binding site" evidence="2">
    <location>
        <position position="22"/>
    </location>
    <ligand>
        <name>Mg(2+)</name>
        <dbReference type="ChEBI" id="CHEBI:18420"/>
    </ligand>
</feature>
<feature type="binding site" evidence="2">
    <location>
        <begin position="92"/>
        <end position="96"/>
    </location>
    <ligand>
        <name>GTP</name>
        <dbReference type="ChEBI" id="CHEBI:37565"/>
    </ligand>
</feature>
<feature type="binding site" evidence="2">
    <location>
        <begin position="154"/>
        <end position="157"/>
    </location>
    <ligand>
        <name>GTP</name>
        <dbReference type="ChEBI" id="CHEBI:37565"/>
    </ligand>
</feature>
<gene>
    <name evidence="2" type="primary">tuf</name>
    <name type="ordered locus">Igni_1150</name>
</gene>
<comment type="function">
    <text evidence="2">GTP hydrolase that promotes the GTP-dependent binding of aminoacyl-tRNA to the A-site of ribosomes during protein biosynthesis.</text>
</comment>
<comment type="catalytic activity">
    <reaction evidence="2">
        <text>GTP + H2O = GDP + phosphate + H(+)</text>
        <dbReference type="Rhea" id="RHEA:19669"/>
        <dbReference type="ChEBI" id="CHEBI:15377"/>
        <dbReference type="ChEBI" id="CHEBI:15378"/>
        <dbReference type="ChEBI" id="CHEBI:37565"/>
        <dbReference type="ChEBI" id="CHEBI:43474"/>
        <dbReference type="ChEBI" id="CHEBI:58189"/>
        <dbReference type="EC" id="3.6.5.3"/>
    </reaction>
    <physiologicalReaction direction="left-to-right" evidence="2">
        <dbReference type="Rhea" id="RHEA:19670"/>
    </physiologicalReaction>
</comment>
<comment type="subcellular location">
    <subcellularLocation>
        <location evidence="2">Cytoplasm</location>
    </subcellularLocation>
</comment>
<comment type="similarity">
    <text evidence="2">Belongs to the TRAFAC class translation factor GTPase superfamily. Classic translation factor GTPase family. EF-Tu/EF-1A subfamily.</text>
</comment>
<sequence>MSKKEKPHMNLIVIGHVDHGKSTLVGHLLYELGFVDEKTLKMLEEEAKKRGKESFKYAWLLDKLKEERERGVTIDLTFMKFETPKYYFTIIDAPGHRDFIKNMITGASQADAAILVVSARPGEFEAGMSAEGQTREHILLAKTMGIDQIIVAVNKMDATEPPWSEKRYKQIVETLKKFMKGLGFKVDEIPFVPVSAWTGDNIIKRSENMPWYKGPTLVEALDNLKPPSVEKWAKLPLRIPIQDVYSITGVGTVPVGRVETGVLKVGDKVVFMPPGVGGEVRSIEMHHEKIEQAMPGDNIGFNVRGVSKNDIKRGDVAGHPENPPTVADQFTARVFVIWHPSAIAVGYTPVIHAHTASVASRIIEIKQKIDPRTGKVIEENPSFLKPGDAAVVVFKPLKPMVIEKFQEFQPLGRFAMRDMGKTVGIGIVTDVKPAKVEIKMKK</sequence>
<protein>
    <recommendedName>
        <fullName evidence="2">Elongation factor 1-alpha</fullName>
        <shortName evidence="2">EF-1-alpha</shortName>
        <ecNumber evidence="2">3.6.5.3</ecNumber>
    </recommendedName>
    <alternativeName>
        <fullName evidence="2">Elongation factor Tu</fullName>
        <shortName evidence="2">EF-Tu</shortName>
    </alternativeName>
</protein>
<organism>
    <name type="scientific">Ignicoccus hospitalis (strain KIN4/I / DSM 18386 / JCM 14125)</name>
    <dbReference type="NCBI Taxonomy" id="453591"/>
    <lineage>
        <taxon>Archaea</taxon>
        <taxon>Thermoproteota</taxon>
        <taxon>Thermoprotei</taxon>
        <taxon>Desulfurococcales</taxon>
        <taxon>Desulfurococcaceae</taxon>
        <taxon>Ignicoccus</taxon>
    </lineage>
</organism>
<proteinExistence type="inferred from homology"/>
<name>EF1A_IGNH4</name>
<keyword id="KW-0963">Cytoplasm</keyword>
<keyword id="KW-0251">Elongation factor</keyword>
<keyword id="KW-0342">GTP-binding</keyword>
<keyword id="KW-0378">Hydrolase</keyword>
<keyword id="KW-0460">Magnesium</keyword>
<keyword id="KW-0479">Metal-binding</keyword>
<keyword id="KW-0547">Nucleotide-binding</keyword>
<keyword id="KW-0648">Protein biosynthesis</keyword>
<keyword id="KW-1185">Reference proteome</keyword>
<dbReference type="EC" id="3.6.5.3" evidence="2"/>
<dbReference type="EMBL" id="CP000816">
    <property type="protein sequence ID" value="ABU82327.1"/>
    <property type="molecule type" value="Genomic_DNA"/>
</dbReference>
<dbReference type="RefSeq" id="WP_012123291.1">
    <property type="nucleotide sequence ID" value="NC_009776.1"/>
</dbReference>
<dbReference type="SMR" id="A8ABM5"/>
<dbReference type="STRING" id="453591.Igni_1150"/>
<dbReference type="GeneID" id="5561918"/>
<dbReference type="KEGG" id="iho:Igni_1150"/>
<dbReference type="eggNOG" id="arCOG01561">
    <property type="taxonomic scope" value="Archaea"/>
</dbReference>
<dbReference type="HOGENOM" id="CLU_007265_3_5_2"/>
<dbReference type="OrthoDB" id="371718at2157"/>
<dbReference type="PhylomeDB" id="A8ABM5"/>
<dbReference type="Proteomes" id="UP000000262">
    <property type="component" value="Chromosome"/>
</dbReference>
<dbReference type="GO" id="GO:0005737">
    <property type="term" value="C:cytoplasm"/>
    <property type="evidence" value="ECO:0007669"/>
    <property type="project" value="UniProtKB-SubCell"/>
</dbReference>
<dbReference type="GO" id="GO:0005525">
    <property type="term" value="F:GTP binding"/>
    <property type="evidence" value="ECO:0007669"/>
    <property type="project" value="UniProtKB-UniRule"/>
</dbReference>
<dbReference type="GO" id="GO:0003924">
    <property type="term" value="F:GTPase activity"/>
    <property type="evidence" value="ECO:0007669"/>
    <property type="project" value="InterPro"/>
</dbReference>
<dbReference type="GO" id="GO:0003746">
    <property type="term" value="F:translation elongation factor activity"/>
    <property type="evidence" value="ECO:0007669"/>
    <property type="project" value="UniProtKB-UniRule"/>
</dbReference>
<dbReference type="CDD" id="cd01883">
    <property type="entry name" value="EF1_alpha"/>
    <property type="match status" value="1"/>
</dbReference>
<dbReference type="CDD" id="cd03693">
    <property type="entry name" value="EF1_alpha_II"/>
    <property type="match status" value="1"/>
</dbReference>
<dbReference type="CDD" id="cd03705">
    <property type="entry name" value="EF1_alpha_III"/>
    <property type="match status" value="1"/>
</dbReference>
<dbReference type="FunFam" id="2.40.30.10:FF:000003">
    <property type="entry name" value="Elongation factor 1-alpha"/>
    <property type="match status" value="1"/>
</dbReference>
<dbReference type="FunFam" id="2.40.30.10:FF:000005">
    <property type="entry name" value="Elongation factor 1-alpha"/>
    <property type="match status" value="1"/>
</dbReference>
<dbReference type="FunFam" id="3.40.50.300:FF:000255">
    <property type="entry name" value="Elongation factor 1-alpha"/>
    <property type="match status" value="1"/>
</dbReference>
<dbReference type="Gene3D" id="3.40.50.300">
    <property type="entry name" value="P-loop containing nucleotide triphosphate hydrolases"/>
    <property type="match status" value="1"/>
</dbReference>
<dbReference type="Gene3D" id="2.40.30.10">
    <property type="entry name" value="Translation factors"/>
    <property type="match status" value="2"/>
</dbReference>
<dbReference type="HAMAP" id="MF_00118_A">
    <property type="entry name" value="EF_Tu_A"/>
    <property type="match status" value="1"/>
</dbReference>
<dbReference type="InterPro" id="IPR004161">
    <property type="entry name" value="EFTu-like_2"/>
</dbReference>
<dbReference type="InterPro" id="IPR031157">
    <property type="entry name" value="G_TR_CS"/>
</dbReference>
<dbReference type="InterPro" id="IPR054696">
    <property type="entry name" value="GTP-eEF1A_C"/>
</dbReference>
<dbReference type="InterPro" id="IPR027417">
    <property type="entry name" value="P-loop_NTPase"/>
</dbReference>
<dbReference type="InterPro" id="IPR005225">
    <property type="entry name" value="Small_GTP-bd"/>
</dbReference>
<dbReference type="InterPro" id="IPR000795">
    <property type="entry name" value="T_Tr_GTP-bd_dom"/>
</dbReference>
<dbReference type="InterPro" id="IPR050100">
    <property type="entry name" value="TRAFAC_GTPase_members"/>
</dbReference>
<dbReference type="InterPro" id="IPR009000">
    <property type="entry name" value="Transl_B-barrel_sf"/>
</dbReference>
<dbReference type="InterPro" id="IPR009001">
    <property type="entry name" value="Transl_elong_EF1A/Init_IF2_C"/>
</dbReference>
<dbReference type="InterPro" id="IPR004539">
    <property type="entry name" value="Transl_elong_EF1A_euk/arc"/>
</dbReference>
<dbReference type="NCBIfam" id="TIGR00483">
    <property type="entry name" value="EF-1_alpha"/>
    <property type="match status" value="1"/>
</dbReference>
<dbReference type="NCBIfam" id="NF008969">
    <property type="entry name" value="PRK12317.1"/>
    <property type="match status" value="1"/>
</dbReference>
<dbReference type="NCBIfam" id="TIGR00231">
    <property type="entry name" value="small_GTP"/>
    <property type="match status" value="1"/>
</dbReference>
<dbReference type="PANTHER" id="PTHR23115">
    <property type="entry name" value="TRANSLATION FACTOR"/>
    <property type="match status" value="1"/>
</dbReference>
<dbReference type="Pfam" id="PF22594">
    <property type="entry name" value="GTP-eEF1A_C"/>
    <property type="match status" value="1"/>
</dbReference>
<dbReference type="Pfam" id="PF00009">
    <property type="entry name" value="GTP_EFTU"/>
    <property type="match status" value="1"/>
</dbReference>
<dbReference type="Pfam" id="PF03144">
    <property type="entry name" value="GTP_EFTU_D2"/>
    <property type="match status" value="1"/>
</dbReference>
<dbReference type="PRINTS" id="PR00315">
    <property type="entry name" value="ELONGATNFCT"/>
</dbReference>
<dbReference type="SUPFAM" id="SSF50465">
    <property type="entry name" value="EF-Tu/eEF-1alpha/eIF2-gamma C-terminal domain"/>
    <property type="match status" value="1"/>
</dbReference>
<dbReference type="SUPFAM" id="SSF52540">
    <property type="entry name" value="P-loop containing nucleoside triphosphate hydrolases"/>
    <property type="match status" value="1"/>
</dbReference>
<dbReference type="SUPFAM" id="SSF50447">
    <property type="entry name" value="Translation proteins"/>
    <property type="match status" value="1"/>
</dbReference>
<dbReference type="PROSITE" id="PS00301">
    <property type="entry name" value="G_TR_1"/>
    <property type="match status" value="1"/>
</dbReference>
<dbReference type="PROSITE" id="PS51722">
    <property type="entry name" value="G_TR_2"/>
    <property type="match status" value="1"/>
</dbReference>
<reference key="1">
    <citation type="journal article" date="2008" name="Genome Biol.">
        <title>A genomic analysis of the archaeal system Ignicoccus hospitalis-Nanoarchaeum equitans.</title>
        <authorList>
            <person name="Podar M."/>
            <person name="Anderson I."/>
            <person name="Makarova K.S."/>
            <person name="Elkins J.G."/>
            <person name="Ivanova N."/>
            <person name="Wall M.A."/>
            <person name="Lykidis A."/>
            <person name="Mavromatis K."/>
            <person name="Sun H."/>
            <person name="Hudson M.E."/>
            <person name="Chen W."/>
            <person name="Deciu C."/>
            <person name="Hutchison D."/>
            <person name="Eads J.R."/>
            <person name="Anderson A."/>
            <person name="Fernandes F."/>
            <person name="Szeto E."/>
            <person name="Lapidus A."/>
            <person name="Kyrpides N.C."/>
            <person name="Saier M.H. Jr."/>
            <person name="Richardson P.M."/>
            <person name="Rachel R."/>
            <person name="Huber H."/>
            <person name="Eisen J.A."/>
            <person name="Koonin E.V."/>
            <person name="Keller M."/>
            <person name="Stetter K.O."/>
        </authorList>
    </citation>
    <scope>NUCLEOTIDE SEQUENCE [LARGE SCALE GENOMIC DNA]</scope>
    <source>
        <strain>KIN4/I / DSM 18386 / JCM 14125</strain>
    </source>
</reference>